<accession>Q7B9Y6</accession>
<accession>B8PV38</accession>
<protein>
    <recommendedName>
        <fullName evidence="1">Putrescine carbamoyltransferase</fullName>
        <shortName evidence="1">PTC</shortName>
        <shortName evidence="1">PTCase</shortName>
        <ecNumber evidence="1">2.1.3.6</ecNumber>
    </recommendedName>
    <alternativeName>
        <fullName evidence="1">Putrescine transcarbamoylase</fullName>
    </alternativeName>
    <alternativeName>
        <fullName evidence="1">Putrescine transcarbamylase</fullName>
    </alternativeName>
</protein>
<gene>
    <name evidence="1" type="primary">ptcA</name>
    <name type="synonym">otc</name>
</gene>
<sequence>MNMTKRDFIDTNTYTKEEIQYMIDLGIKIKESIKNGYYPPLLKNKTLGMIFEQSSTRTRTSAEAAMTELGGHAQYLAPGQIQLGGHETIEDTSQVLGRILDIIGARVERHHTVAEVGKFAKVPVVNFMSDYNHPTQELGDIITMTEHLPKGKKLSDCKIVFVGDATQVCVSTMFMATKMGMDFVQFGPKGFQIKPETLKIGQQNAKVSGGSVTITEDADEAFKDADFIYTDVWYGLYEAELSEEDRMKIFYPKYQVNAELVAKASDHVKFMHCLPATRGEEVTDEVIDSDYSIVWDEAENRKTAMRAIFVYLLNPELRKAQASQAVADKYDAEFSLMLRNAVDDQRNAD</sequence>
<evidence type="ECO:0000255" key="1">
    <source>
        <dbReference type="HAMAP-Rule" id="MF_02102"/>
    </source>
</evidence>
<evidence type="ECO:0000305" key="2"/>
<name>PTC_LEVBR</name>
<proteinExistence type="inferred from homology"/>
<keyword id="KW-0963">Cytoplasm</keyword>
<keyword id="KW-0620">Polyamine biosynthesis</keyword>
<keyword id="KW-0808">Transferase</keyword>
<comment type="function">
    <text evidence="1">Catalyzes the phosphorolysis of N-carbamoylputrescine to form carbamoyl phosphate and putrescine. Is involved in the degradation pathway of the polyamine agmatine.</text>
</comment>
<comment type="catalytic activity">
    <reaction evidence="1">
        <text>carbamoyl phosphate + putrescine = N-carbamoylputrescine + phosphate + H(+)</text>
        <dbReference type="Rhea" id="RHEA:21936"/>
        <dbReference type="ChEBI" id="CHEBI:15378"/>
        <dbReference type="ChEBI" id="CHEBI:43474"/>
        <dbReference type="ChEBI" id="CHEBI:58228"/>
        <dbReference type="ChEBI" id="CHEBI:58318"/>
        <dbReference type="ChEBI" id="CHEBI:326268"/>
        <dbReference type="EC" id="2.1.3.6"/>
    </reaction>
</comment>
<comment type="pathway">
    <text evidence="1">Amine and polyamine biosynthesis; putrescine biosynthesis via agmatine pathway; putrescine from N-carbamoylputrescine (transferase route): step 1/1.</text>
</comment>
<comment type="subunit">
    <text evidence="1">Homotrimer.</text>
</comment>
<comment type="subcellular location">
    <subcellularLocation>
        <location evidence="1">Cytoplasm</location>
    </subcellularLocation>
</comment>
<comment type="similarity">
    <text evidence="1">Belongs to the aspartate/ornithine carbamoyltransferase superfamily. PTCase family.</text>
</comment>
<reference key="1">
    <citation type="journal article" date="2003" name="FEMS Microbiol. Lett.">
        <title>The tyrosine decarboxylase operon of Lactobacillus brevis IOEB 9809: characterization and conservation in tyramine-producing bacteria.</title>
        <authorList>
            <person name="Lucas P."/>
            <person name="Landete J."/>
            <person name="Coton M."/>
            <person name="Coton E."/>
            <person name="Lonvaud-Funel A."/>
        </authorList>
    </citation>
    <scope>NUCLEOTIDE SEQUENCE [GENOMIC DNA]</scope>
    <source>
        <strain>IOEB 9809</strain>
    </source>
</reference>
<reference key="2">
    <citation type="submission" date="2007-10" db="EMBL/GenBank/DDBJ databases">
        <title>tyrdc locus polymorphism in Lactobacillus brevis indicates that the tyramine-producing pathway corresponds to a strain-dependent genomic island.</title>
        <authorList>
            <person name="Coton E."/>
            <person name="Coton M."/>
        </authorList>
    </citation>
    <scope>NUCLEOTIDE SEQUENCE [GENOMIC DNA]</scope>
    <source>
        <strain>NS77</strain>
    </source>
</reference>
<dbReference type="EC" id="2.1.3.6" evidence="1"/>
<dbReference type="EMBL" id="AF446085">
    <property type="protein sequence ID" value="AAQ83560.4"/>
    <property type="molecule type" value="Genomic_DNA"/>
</dbReference>
<dbReference type="EMBL" id="EU195891">
    <property type="protein sequence ID" value="ABY71224.1"/>
    <property type="molecule type" value="Genomic_DNA"/>
</dbReference>
<dbReference type="SMR" id="Q7B9Y6"/>
<dbReference type="UniPathway" id="UPA00534">
    <property type="reaction ID" value="UER00941"/>
</dbReference>
<dbReference type="GO" id="GO:0005737">
    <property type="term" value="C:cytoplasm"/>
    <property type="evidence" value="ECO:0007669"/>
    <property type="project" value="UniProtKB-SubCell"/>
</dbReference>
<dbReference type="GO" id="GO:0016597">
    <property type="term" value="F:amino acid binding"/>
    <property type="evidence" value="ECO:0007669"/>
    <property type="project" value="InterPro"/>
</dbReference>
<dbReference type="GO" id="GO:0004585">
    <property type="term" value="F:ornithine carbamoyltransferase activity"/>
    <property type="evidence" value="ECO:0007669"/>
    <property type="project" value="UniProtKB-ARBA"/>
</dbReference>
<dbReference type="GO" id="GO:0050231">
    <property type="term" value="F:putrescine carbamoyltransferase activity"/>
    <property type="evidence" value="ECO:0007669"/>
    <property type="project" value="UniProtKB-UniRule"/>
</dbReference>
<dbReference type="GO" id="GO:0042450">
    <property type="term" value="P:arginine biosynthetic process via ornithine"/>
    <property type="evidence" value="ECO:0007669"/>
    <property type="project" value="TreeGrafter"/>
</dbReference>
<dbReference type="GO" id="GO:0019240">
    <property type="term" value="P:citrulline biosynthetic process"/>
    <property type="evidence" value="ECO:0007669"/>
    <property type="project" value="TreeGrafter"/>
</dbReference>
<dbReference type="GO" id="GO:0033390">
    <property type="term" value="P:putrescine biosynthetic process from arginine via N-carbamoylputrescine"/>
    <property type="evidence" value="ECO:0007669"/>
    <property type="project" value="UniProtKB-UniRule"/>
</dbReference>
<dbReference type="FunFam" id="3.40.50.1370:FF:000008">
    <property type="entry name" value="Ornithine carbamoyltransferase"/>
    <property type="match status" value="1"/>
</dbReference>
<dbReference type="Gene3D" id="3.40.50.1370">
    <property type="entry name" value="Aspartate/ornithine carbamoyltransferase"/>
    <property type="match status" value="2"/>
</dbReference>
<dbReference type="HAMAP" id="MF_02102">
    <property type="entry name" value="PTCase"/>
    <property type="match status" value="1"/>
</dbReference>
<dbReference type="InterPro" id="IPR006132">
    <property type="entry name" value="Asp/Orn_carbamoyltranf_P-bd"/>
</dbReference>
<dbReference type="InterPro" id="IPR006130">
    <property type="entry name" value="Asp/Orn_carbamoylTrfase"/>
</dbReference>
<dbReference type="InterPro" id="IPR036901">
    <property type="entry name" value="Asp/Orn_carbamoylTrfase_sf"/>
</dbReference>
<dbReference type="InterPro" id="IPR006131">
    <property type="entry name" value="Asp_carbamoyltransf_Asp/Orn-bd"/>
</dbReference>
<dbReference type="InterPro" id="IPR002292">
    <property type="entry name" value="Orn/put_carbamltrans"/>
</dbReference>
<dbReference type="InterPro" id="IPR024903">
    <property type="entry name" value="PtcA"/>
</dbReference>
<dbReference type="NCBIfam" id="TIGR00658">
    <property type="entry name" value="orni_carb_tr"/>
    <property type="match status" value="1"/>
</dbReference>
<dbReference type="NCBIfam" id="NF001986">
    <property type="entry name" value="PRK00779.1"/>
    <property type="match status" value="1"/>
</dbReference>
<dbReference type="NCBIfam" id="TIGR04384">
    <property type="entry name" value="putr_carbamoyl"/>
    <property type="match status" value="1"/>
</dbReference>
<dbReference type="PANTHER" id="PTHR45753">
    <property type="entry name" value="ORNITHINE CARBAMOYLTRANSFERASE, MITOCHONDRIAL"/>
    <property type="match status" value="1"/>
</dbReference>
<dbReference type="PANTHER" id="PTHR45753:SF3">
    <property type="entry name" value="ORNITHINE TRANSCARBAMYLASE, MITOCHONDRIAL"/>
    <property type="match status" value="1"/>
</dbReference>
<dbReference type="Pfam" id="PF00185">
    <property type="entry name" value="OTCace"/>
    <property type="match status" value="1"/>
</dbReference>
<dbReference type="Pfam" id="PF02729">
    <property type="entry name" value="OTCace_N"/>
    <property type="match status" value="1"/>
</dbReference>
<dbReference type="PRINTS" id="PR00100">
    <property type="entry name" value="AOTCASE"/>
</dbReference>
<dbReference type="PRINTS" id="PR00102">
    <property type="entry name" value="OTCASE"/>
</dbReference>
<dbReference type="SUPFAM" id="SSF53671">
    <property type="entry name" value="Aspartate/ornithine carbamoyltransferase"/>
    <property type="match status" value="1"/>
</dbReference>
<organism>
    <name type="scientific">Levilactobacillus brevis</name>
    <name type="common">Lactobacillus brevis</name>
    <dbReference type="NCBI Taxonomy" id="1580"/>
    <lineage>
        <taxon>Bacteria</taxon>
        <taxon>Bacillati</taxon>
        <taxon>Bacillota</taxon>
        <taxon>Bacilli</taxon>
        <taxon>Lactobacillales</taxon>
        <taxon>Lactobacillaceae</taxon>
        <taxon>Levilactobacillus</taxon>
    </lineage>
</organism>
<feature type="chain" id="PRO_0000380719" description="Putrescine carbamoyltransferase">
    <location>
        <begin position="1"/>
        <end position="349"/>
    </location>
</feature>
<feature type="binding site" evidence="1">
    <location>
        <begin position="55"/>
        <end position="59"/>
    </location>
    <ligand>
        <name>carbamoyl phosphate</name>
        <dbReference type="ChEBI" id="CHEBI:58228"/>
    </ligand>
</feature>
<feature type="binding site" evidence="1">
    <location>
        <position position="106"/>
    </location>
    <ligand>
        <name>carbamoyl phosphate</name>
        <dbReference type="ChEBI" id="CHEBI:58228"/>
    </ligand>
</feature>
<feature type="binding site" evidence="1">
    <location>
        <position position="133"/>
    </location>
    <ligand>
        <name>carbamoyl phosphate</name>
        <dbReference type="ChEBI" id="CHEBI:58228"/>
    </ligand>
</feature>
<feature type="binding site" evidence="1">
    <location>
        <begin position="272"/>
        <end position="275"/>
    </location>
    <ligand>
        <name>putrescine</name>
        <dbReference type="ChEBI" id="CHEBI:326268"/>
    </ligand>
</feature>
<feature type="site" description="Important for structural integrity" evidence="1">
    <location>
        <position position="30"/>
    </location>
</feature>
<feature type="site" description="Important for structural integrity" evidence="1">
    <location>
        <position position="146"/>
    </location>
</feature>
<feature type="sequence conflict" description="In Ref. 2; ABY71224." evidence="2" ref="2">
    <original>F</original>
    <variation>L</variation>
    <location>
        <position position="222"/>
    </location>
</feature>
<feature type="sequence conflict" description="In Ref. 2; ABY71224." evidence="2" ref="2">
    <original>R</original>
    <variation>H</variation>
    <location>
        <position position="318"/>
    </location>
</feature>